<dbReference type="EC" id="3.6.1.-" evidence="1"/>
<dbReference type="EMBL" id="CU928164">
    <property type="protein sequence ID" value="CAR16367.1"/>
    <property type="molecule type" value="Genomic_DNA"/>
</dbReference>
<dbReference type="RefSeq" id="WP_000113027.1">
    <property type="nucleotide sequence ID" value="NC_011750.1"/>
</dbReference>
<dbReference type="RefSeq" id="YP_002406271.1">
    <property type="nucleotide sequence ID" value="NC_011750.1"/>
</dbReference>
<dbReference type="SMR" id="B7NJ48"/>
<dbReference type="STRING" id="585057.ECIAI39_0227"/>
<dbReference type="GeneID" id="93777004"/>
<dbReference type="KEGG" id="ect:ECIAI39_0227"/>
<dbReference type="PATRIC" id="fig|585057.6.peg.245"/>
<dbReference type="HOGENOM" id="CLU_044146_5_2_6"/>
<dbReference type="Proteomes" id="UP000000749">
    <property type="component" value="Chromosome"/>
</dbReference>
<dbReference type="GO" id="GO:0002145">
    <property type="term" value="F:4-amino-5-hydroxymethyl-2-methylpyrimidine diphosphatase activity"/>
    <property type="evidence" value="ECO:0007669"/>
    <property type="project" value="RHEA"/>
</dbReference>
<dbReference type="GO" id="GO:0000287">
    <property type="term" value="F:magnesium ion binding"/>
    <property type="evidence" value="ECO:0000250"/>
    <property type="project" value="UniProtKB"/>
</dbReference>
<dbReference type="GO" id="GO:0016791">
    <property type="term" value="F:phosphatase activity"/>
    <property type="evidence" value="ECO:0000250"/>
    <property type="project" value="UniProtKB"/>
</dbReference>
<dbReference type="CDD" id="cd07516">
    <property type="entry name" value="HAD_Pase"/>
    <property type="match status" value="1"/>
</dbReference>
<dbReference type="FunFam" id="3.30.1240.10:FF:000002">
    <property type="entry name" value="HMP-PP phosphatase"/>
    <property type="match status" value="1"/>
</dbReference>
<dbReference type="Gene3D" id="3.30.1240.10">
    <property type="match status" value="1"/>
</dbReference>
<dbReference type="Gene3D" id="3.40.50.1000">
    <property type="entry name" value="HAD superfamily/HAD-like"/>
    <property type="match status" value="1"/>
</dbReference>
<dbReference type="HAMAP" id="MF_01847">
    <property type="entry name" value="HMP_PP_phosphat"/>
    <property type="match status" value="1"/>
</dbReference>
<dbReference type="InterPro" id="IPR000150">
    <property type="entry name" value="Cof"/>
</dbReference>
<dbReference type="InterPro" id="IPR036412">
    <property type="entry name" value="HAD-like_sf"/>
</dbReference>
<dbReference type="InterPro" id="IPR006379">
    <property type="entry name" value="HAD-SF_hydro_IIB"/>
</dbReference>
<dbReference type="InterPro" id="IPR023214">
    <property type="entry name" value="HAD_sf"/>
</dbReference>
<dbReference type="InterPro" id="IPR023938">
    <property type="entry name" value="HMP-PP_phosphatase"/>
</dbReference>
<dbReference type="NCBIfam" id="TIGR00099">
    <property type="entry name" value="Cof-subfamily"/>
    <property type="match status" value="1"/>
</dbReference>
<dbReference type="NCBIfam" id="TIGR01484">
    <property type="entry name" value="HAD-SF-IIB"/>
    <property type="match status" value="1"/>
</dbReference>
<dbReference type="NCBIfam" id="NF011705">
    <property type="entry name" value="PRK15126.1"/>
    <property type="match status" value="1"/>
</dbReference>
<dbReference type="PANTHER" id="PTHR47267">
    <property type="match status" value="1"/>
</dbReference>
<dbReference type="PANTHER" id="PTHR47267:SF2">
    <property type="entry name" value="HMP-PP PHOSPHATASE"/>
    <property type="match status" value="1"/>
</dbReference>
<dbReference type="Pfam" id="PF08282">
    <property type="entry name" value="Hydrolase_3"/>
    <property type="match status" value="1"/>
</dbReference>
<dbReference type="SFLD" id="SFLDG01140">
    <property type="entry name" value="C2.B:_Phosphomannomutase_and_P"/>
    <property type="match status" value="1"/>
</dbReference>
<dbReference type="SFLD" id="SFLDS00003">
    <property type="entry name" value="Haloacid_Dehalogenase"/>
    <property type="match status" value="1"/>
</dbReference>
<dbReference type="SUPFAM" id="SSF56784">
    <property type="entry name" value="HAD-like"/>
    <property type="match status" value="1"/>
</dbReference>
<dbReference type="PROSITE" id="PS01228">
    <property type="entry name" value="COF_1"/>
    <property type="match status" value="1"/>
</dbReference>
<dbReference type="PROSITE" id="PS01229">
    <property type="entry name" value="COF_2"/>
    <property type="match status" value="1"/>
</dbReference>
<organism>
    <name type="scientific">Escherichia coli O7:K1 (strain IAI39 / ExPEC)</name>
    <dbReference type="NCBI Taxonomy" id="585057"/>
    <lineage>
        <taxon>Bacteria</taxon>
        <taxon>Pseudomonadati</taxon>
        <taxon>Pseudomonadota</taxon>
        <taxon>Gammaproteobacteria</taxon>
        <taxon>Enterobacterales</taxon>
        <taxon>Enterobacteriaceae</taxon>
        <taxon>Escherichia</taxon>
    </lineage>
</organism>
<reference key="1">
    <citation type="journal article" date="2009" name="PLoS Genet.">
        <title>Organised genome dynamics in the Escherichia coli species results in highly diverse adaptive paths.</title>
        <authorList>
            <person name="Touchon M."/>
            <person name="Hoede C."/>
            <person name="Tenaillon O."/>
            <person name="Barbe V."/>
            <person name="Baeriswyl S."/>
            <person name="Bidet P."/>
            <person name="Bingen E."/>
            <person name="Bonacorsi S."/>
            <person name="Bouchier C."/>
            <person name="Bouvet O."/>
            <person name="Calteau A."/>
            <person name="Chiapello H."/>
            <person name="Clermont O."/>
            <person name="Cruveiller S."/>
            <person name="Danchin A."/>
            <person name="Diard M."/>
            <person name="Dossat C."/>
            <person name="Karoui M.E."/>
            <person name="Frapy E."/>
            <person name="Garry L."/>
            <person name="Ghigo J.M."/>
            <person name="Gilles A.M."/>
            <person name="Johnson J."/>
            <person name="Le Bouguenec C."/>
            <person name="Lescat M."/>
            <person name="Mangenot S."/>
            <person name="Martinez-Jehanne V."/>
            <person name="Matic I."/>
            <person name="Nassif X."/>
            <person name="Oztas S."/>
            <person name="Petit M.A."/>
            <person name="Pichon C."/>
            <person name="Rouy Z."/>
            <person name="Ruf C.S."/>
            <person name="Schneider D."/>
            <person name="Tourret J."/>
            <person name="Vacherie B."/>
            <person name="Vallenet D."/>
            <person name="Medigue C."/>
            <person name="Rocha E.P.C."/>
            <person name="Denamur E."/>
        </authorList>
    </citation>
    <scope>NUCLEOTIDE SEQUENCE [LARGE SCALE GENOMIC DNA]</scope>
    <source>
        <strain>IAI39 / ExPEC</strain>
    </source>
</reference>
<keyword id="KW-0378">Hydrolase</keyword>
<keyword id="KW-0460">Magnesium</keyword>
<keyword id="KW-0479">Metal-binding</keyword>
<evidence type="ECO:0000255" key="1">
    <source>
        <dbReference type="HAMAP-Rule" id="MF_01847"/>
    </source>
</evidence>
<proteinExistence type="inferred from homology"/>
<sequence>MARLAAFDMDGTLLMPDHHLGEKTLSTLARLRERDITLTFATGRHALEMQHILGALSLDAYLITGNGTRVHSLEGELLHRDDLPADVAELVLYQQWDTRASMHIFNDDGWFTGKEIPALLQAFVYSGFRYQIIDVKKMPLGSVTKICFCGDHDDLTRLQIQLYEALGERAHLCFSATDCLEVLPVGCNKGAALTVLTQHLGLSLRDCMAFGDAMNDREMLGSVGSGFIMGNAMPQLRAELPHLPVIGHCRNQAVSHYLTHWLDYPHLPYSPE</sequence>
<gene>
    <name evidence="1" type="primary">cof</name>
    <name type="ordered locus">ECIAI39_0227</name>
</gene>
<accession>B7NJ48</accession>
<feature type="chain" id="PRO_1000188499" description="HMP-PP phosphatase">
    <location>
        <begin position="1"/>
        <end position="272"/>
    </location>
</feature>
<feature type="active site" description="Nucleophile" evidence="1">
    <location>
        <position position="8"/>
    </location>
</feature>
<feature type="binding site" evidence="1">
    <location>
        <position position="8"/>
    </location>
    <ligand>
        <name>Mg(2+)</name>
        <dbReference type="ChEBI" id="CHEBI:18420"/>
    </ligand>
</feature>
<feature type="binding site" evidence="1">
    <location>
        <position position="10"/>
    </location>
    <ligand>
        <name>Mg(2+)</name>
        <dbReference type="ChEBI" id="CHEBI:18420"/>
    </ligand>
</feature>
<feature type="binding site" evidence="1">
    <location>
        <position position="212"/>
    </location>
    <ligand>
        <name>Mg(2+)</name>
        <dbReference type="ChEBI" id="CHEBI:18420"/>
    </ligand>
</feature>
<protein>
    <recommendedName>
        <fullName evidence="1">HMP-PP phosphatase</fullName>
        <ecNumber evidence="1">3.6.1.-</ecNumber>
    </recommendedName>
</protein>
<comment type="function">
    <text evidence="1">Catalyzes the hydrolysis of 4-amino-2-methyl-5-hydroxymethylpyrimidine pyrophosphate (HMP-PP) to 4-amino-2-methyl-5-hydroxymethylpyrimidine phosphate (HMP-P).</text>
</comment>
<comment type="catalytic activity">
    <reaction evidence="1">
        <text>4-amino-2-methyl-5-(diphosphooxymethyl)pyrimidine + H2O = 4-amino-2-methyl-5-(phosphooxymethyl)pyrimidine + phosphate + H(+)</text>
        <dbReference type="Rhea" id="RHEA:27914"/>
        <dbReference type="ChEBI" id="CHEBI:15377"/>
        <dbReference type="ChEBI" id="CHEBI:15378"/>
        <dbReference type="ChEBI" id="CHEBI:43474"/>
        <dbReference type="ChEBI" id="CHEBI:57841"/>
        <dbReference type="ChEBI" id="CHEBI:58354"/>
    </reaction>
</comment>
<comment type="cofactor">
    <cofactor evidence="1">
        <name>Mg(2+)</name>
        <dbReference type="ChEBI" id="CHEBI:18420"/>
    </cofactor>
</comment>
<comment type="similarity">
    <text evidence="1">Belongs to the HAD-like hydrolase superfamily. Cof family.</text>
</comment>
<name>COF_ECO7I</name>